<protein>
    <recommendedName>
        <fullName>SPbeta prophage-derived uncharacterized protein YonX</fullName>
    </recommendedName>
</protein>
<gene>
    <name type="primary">yonX</name>
    <name type="ordered locus">BSU20970</name>
</gene>
<sequence>MNAQLFNLESRLDELENEINTQYCELDTNLDALKSNRIELESQLEKFESSLTNRLQGSISNNCRNDLLNLGYTHSQVDCMSDEEVYAALDKIDEEIHNTDQDYSTGFEDLEKQIIEMKRDYFIDRKERGSGNFDEAWEGEILDLEFEYTVLCLEKGLEPLNYIITWEG</sequence>
<dbReference type="EMBL" id="AL009126">
    <property type="protein sequence ID" value="CAB14015.1"/>
    <property type="molecule type" value="Genomic_DNA"/>
</dbReference>
<dbReference type="RefSeq" id="NP_389980.1">
    <property type="nucleotide sequence ID" value="NC_000964.3"/>
</dbReference>
<dbReference type="RefSeq" id="WP_004399486.1">
    <property type="nucleotide sequence ID" value="NZ_OZ025638.1"/>
</dbReference>
<dbReference type="SMR" id="O31938"/>
<dbReference type="FunCoup" id="O31938">
    <property type="interactions" value="2"/>
</dbReference>
<dbReference type="STRING" id="224308.BSU20970"/>
<dbReference type="PaxDb" id="224308-BSU20970"/>
<dbReference type="EnsemblBacteria" id="CAB14015">
    <property type="protein sequence ID" value="CAB14015"/>
    <property type="gene ID" value="BSU_20970"/>
</dbReference>
<dbReference type="GeneID" id="939173"/>
<dbReference type="KEGG" id="bsu:BSU20970"/>
<dbReference type="PATRIC" id="fig|224308.179.peg.2289"/>
<dbReference type="InParanoid" id="O31938"/>
<dbReference type="OrthoDB" id="2896019at2"/>
<dbReference type="BioCyc" id="BSUB:BSU20970-MONOMER"/>
<dbReference type="Proteomes" id="UP000001570">
    <property type="component" value="Chromosome"/>
</dbReference>
<reference key="1">
    <citation type="journal article" date="1997" name="Nature">
        <title>The complete genome sequence of the Gram-positive bacterium Bacillus subtilis.</title>
        <authorList>
            <person name="Kunst F."/>
            <person name="Ogasawara N."/>
            <person name="Moszer I."/>
            <person name="Albertini A.M."/>
            <person name="Alloni G."/>
            <person name="Azevedo V."/>
            <person name="Bertero M.G."/>
            <person name="Bessieres P."/>
            <person name="Bolotin A."/>
            <person name="Borchert S."/>
            <person name="Borriss R."/>
            <person name="Boursier L."/>
            <person name="Brans A."/>
            <person name="Braun M."/>
            <person name="Brignell S.C."/>
            <person name="Bron S."/>
            <person name="Brouillet S."/>
            <person name="Bruschi C.V."/>
            <person name="Caldwell B."/>
            <person name="Capuano V."/>
            <person name="Carter N.M."/>
            <person name="Choi S.-K."/>
            <person name="Codani J.-J."/>
            <person name="Connerton I.F."/>
            <person name="Cummings N.J."/>
            <person name="Daniel R.A."/>
            <person name="Denizot F."/>
            <person name="Devine K.M."/>
            <person name="Duesterhoeft A."/>
            <person name="Ehrlich S.D."/>
            <person name="Emmerson P.T."/>
            <person name="Entian K.-D."/>
            <person name="Errington J."/>
            <person name="Fabret C."/>
            <person name="Ferrari E."/>
            <person name="Foulger D."/>
            <person name="Fritz C."/>
            <person name="Fujita M."/>
            <person name="Fujita Y."/>
            <person name="Fuma S."/>
            <person name="Galizzi A."/>
            <person name="Galleron N."/>
            <person name="Ghim S.-Y."/>
            <person name="Glaser P."/>
            <person name="Goffeau A."/>
            <person name="Golightly E.J."/>
            <person name="Grandi G."/>
            <person name="Guiseppi G."/>
            <person name="Guy B.J."/>
            <person name="Haga K."/>
            <person name="Haiech J."/>
            <person name="Harwood C.R."/>
            <person name="Henaut A."/>
            <person name="Hilbert H."/>
            <person name="Holsappel S."/>
            <person name="Hosono S."/>
            <person name="Hullo M.-F."/>
            <person name="Itaya M."/>
            <person name="Jones L.-M."/>
            <person name="Joris B."/>
            <person name="Karamata D."/>
            <person name="Kasahara Y."/>
            <person name="Klaerr-Blanchard M."/>
            <person name="Klein C."/>
            <person name="Kobayashi Y."/>
            <person name="Koetter P."/>
            <person name="Koningstein G."/>
            <person name="Krogh S."/>
            <person name="Kumano M."/>
            <person name="Kurita K."/>
            <person name="Lapidus A."/>
            <person name="Lardinois S."/>
            <person name="Lauber J."/>
            <person name="Lazarevic V."/>
            <person name="Lee S.-M."/>
            <person name="Levine A."/>
            <person name="Liu H."/>
            <person name="Masuda S."/>
            <person name="Mauel C."/>
            <person name="Medigue C."/>
            <person name="Medina N."/>
            <person name="Mellado R.P."/>
            <person name="Mizuno M."/>
            <person name="Moestl D."/>
            <person name="Nakai S."/>
            <person name="Noback M."/>
            <person name="Noone D."/>
            <person name="O'Reilly M."/>
            <person name="Ogawa K."/>
            <person name="Ogiwara A."/>
            <person name="Oudega B."/>
            <person name="Park S.-H."/>
            <person name="Parro V."/>
            <person name="Pohl T.M."/>
            <person name="Portetelle D."/>
            <person name="Porwollik S."/>
            <person name="Prescott A.M."/>
            <person name="Presecan E."/>
            <person name="Pujic P."/>
            <person name="Purnelle B."/>
            <person name="Rapoport G."/>
            <person name="Rey M."/>
            <person name="Reynolds S."/>
            <person name="Rieger M."/>
            <person name="Rivolta C."/>
            <person name="Rocha E."/>
            <person name="Roche B."/>
            <person name="Rose M."/>
            <person name="Sadaie Y."/>
            <person name="Sato T."/>
            <person name="Scanlan E."/>
            <person name="Schleich S."/>
            <person name="Schroeter R."/>
            <person name="Scoffone F."/>
            <person name="Sekiguchi J."/>
            <person name="Sekowska A."/>
            <person name="Seror S.J."/>
            <person name="Serror P."/>
            <person name="Shin B.-S."/>
            <person name="Soldo B."/>
            <person name="Sorokin A."/>
            <person name="Tacconi E."/>
            <person name="Takagi T."/>
            <person name="Takahashi H."/>
            <person name="Takemaru K."/>
            <person name="Takeuchi M."/>
            <person name="Tamakoshi A."/>
            <person name="Tanaka T."/>
            <person name="Terpstra P."/>
            <person name="Tognoni A."/>
            <person name="Tosato V."/>
            <person name="Uchiyama S."/>
            <person name="Vandenbol M."/>
            <person name="Vannier F."/>
            <person name="Vassarotti A."/>
            <person name="Viari A."/>
            <person name="Wambutt R."/>
            <person name="Wedler E."/>
            <person name="Wedler H."/>
            <person name="Weitzenegger T."/>
            <person name="Winters P."/>
            <person name="Wipat A."/>
            <person name="Yamamoto H."/>
            <person name="Yamane K."/>
            <person name="Yasumoto K."/>
            <person name="Yata K."/>
            <person name="Yoshida K."/>
            <person name="Yoshikawa H.-F."/>
            <person name="Zumstein E."/>
            <person name="Yoshikawa H."/>
            <person name="Danchin A."/>
        </authorList>
    </citation>
    <scope>NUCLEOTIDE SEQUENCE [LARGE SCALE GENOMIC DNA]</scope>
    <source>
        <strain>168</strain>
    </source>
</reference>
<evidence type="ECO:0000255" key="1"/>
<keyword id="KW-0175">Coiled coil</keyword>
<keyword id="KW-1185">Reference proteome</keyword>
<accession>O31938</accession>
<proteinExistence type="predicted"/>
<feature type="chain" id="PRO_0000360458" description="SPbeta prophage-derived uncharacterized protein YonX">
    <location>
        <begin position="1"/>
        <end position="168"/>
    </location>
</feature>
<feature type="coiled-coil region" evidence="1">
    <location>
        <begin position="1"/>
        <end position="53"/>
    </location>
</feature>
<name>YONX_BACSU</name>
<organism>
    <name type="scientific">Bacillus subtilis (strain 168)</name>
    <dbReference type="NCBI Taxonomy" id="224308"/>
    <lineage>
        <taxon>Bacteria</taxon>
        <taxon>Bacillati</taxon>
        <taxon>Bacillota</taxon>
        <taxon>Bacilli</taxon>
        <taxon>Bacillales</taxon>
        <taxon>Bacillaceae</taxon>
        <taxon>Bacillus</taxon>
    </lineage>
</organism>